<evidence type="ECO:0000255" key="1">
    <source>
        <dbReference type="HAMAP-Rule" id="MF_03116"/>
    </source>
</evidence>
<feature type="chain" id="PRO_0000393777" description="Probable methylthioribulose-1-phosphate dehydratase">
    <location>
        <begin position="1"/>
        <end position="229"/>
    </location>
</feature>
<feature type="active site" description="Proton donor/acceptor" evidence="1">
    <location>
        <position position="139"/>
    </location>
</feature>
<feature type="binding site" evidence="1">
    <location>
        <position position="97"/>
    </location>
    <ligand>
        <name>substrate</name>
    </ligand>
</feature>
<feature type="binding site" evidence="1">
    <location>
        <position position="115"/>
    </location>
    <ligand>
        <name>Zn(2+)</name>
        <dbReference type="ChEBI" id="CHEBI:29105"/>
    </ligand>
</feature>
<feature type="binding site" evidence="1">
    <location>
        <position position="117"/>
    </location>
    <ligand>
        <name>Zn(2+)</name>
        <dbReference type="ChEBI" id="CHEBI:29105"/>
    </ligand>
</feature>
<feature type="binding site" evidence="1">
    <location>
        <position position="195"/>
    </location>
    <ligand>
        <name>Zn(2+)</name>
        <dbReference type="ChEBI" id="CHEBI:29105"/>
    </ligand>
</feature>
<gene>
    <name type="ORF">ACYPI006933</name>
</gene>
<dbReference type="EC" id="4.2.1.109" evidence="1"/>
<dbReference type="EMBL" id="AK340891">
    <property type="protein sequence ID" value="BAH71407.1"/>
    <property type="molecule type" value="mRNA"/>
</dbReference>
<dbReference type="SMR" id="C4WU37"/>
<dbReference type="FunCoup" id="C4WU37">
    <property type="interactions" value="950"/>
</dbReference>
<dbReference type="STRING" id="7029.C4WU37"/>
<dbReference type="eggNOG" id="KOG1081">
    <property type="taxonomic scope" value="Eukaryota"/>
</dbReference>
<dbReference type="eggNOG" id="KOG2631">
    <property type="taxonomic scope" value="Eukaryota"/>
</dbReference>
<dbReference type="InParanoid" id="C4WU37"/>
<dbReference type="OrthoDB" id="191080at2759"/>
<dbReference type="UniPathway" id="UPA00904">
    <property type="reaction ID" value="UER00875"/>
</dbReference>
<dbReference type="Proteomes" id="UP000007819">
    <property type="component" value="Unassembled WGS sequence"/>
</dbReference>
<dbReference type="GO" id="GO:0005737">
    <property type="term" value="C:cytoplasm"/>
    <property type="evidence" value="ECO:0007669"/>
    <property type="project" value="UniProtKB-SubCell"/>
</dbReference>
<dbReference type="GO" id="GO:0046570">
    <property type="term" value="F:methylthioribulose 1-phosphate dehydratase activity"/>
    <property type="evidence" value="ECO:0000250"/>
    <property type="project" value="UniProtKB"/>
</dbReference>
<dbReference type="GO" id="GO:0008270">
    <property type="term" value="F:zinc ion binding"/>
    <property type="evidence" value="ECO:0000250"/>
    <property type="project" value="UniProtKB"/>
</dbReference>
<dbReference type="GO" id="GO:0019509">
    <property type="term" value="P:L-methionine salvage from methylthioadenosine"/>
    <property type="evidence" value="ECO:0007669"/>
    <property type="project" value="UniProtKB-UniRule"/>
</dbReference>
<dbReference type="FunFam" id="3.40.225.10:FF:000003">
    <property type="entry name" value="Methylthioribulose-1-phosphate dehydratase"/>
    <property type="match status" value="1"/>
</dbReference>
<dbReference type="Gene3D" id="3.40.225.10">
    <property type="entry name" value="Class II aldolase/adducin N-terminal domain"/>
    <property type="match status" value="1"/>
</dbReference>
<dbReference type="HAMAP" id="MF_03116">
    <property type="entry name" value="Salvage_MtnB_euk"/>
    <property type="match status" value="1"/>
</dbReference>
<dbReference type="InterPro" id="IPR001303">
    <property type="entry name" value="Aldolase_II/adducin_N"/>
</dbReference>
<dbReference type="InterPro" id="IPR036409">
    <property type="entry name" value="Aldolase_II/adducin_N_sf"/>
</dbReference>
<dbReference type="InterPro" id="IPR017714">
    <property type="entry name" value="MethylthioRu-1-P_deHdtase_MtnB"/>
</dbReference>
<dbReference type="InterPro" id="IPR027514">
    <property type="entry name" value="Salvage_MtnB_euk"/>
</dbReference>
<dbReference type="NCBIfam" id="TIGR03328">
    <property type="entry name" value="salvage_mtnB"/>
    <property type="match status" value="1"/>
</dbReference>
<dbReference type="PANTHER" id="PTHR10640">
    <property type="entry name" value="METHYLTHIORIBULOSE-1-PHOSPHATE DEHYDRATASE"/>
    <property type="match status" value="1"/>
</dbReference>
<dbReference type="PANTHER" id="PTHR10640:SF7">
    <property type="entry name" value="METHYLTHIORIBULOSE-1-PHOSPHATE DEHYDRATASE"/>
    <property type="match status" value="1"/>
</dbReference>
<dbReference type="Pfam" id="PF00596">
    <property type="entry name" value="Aldolase_II"/>
    <property type="match status" value="1"/>
</dbReference>
<dbReference type="SMART" id="SM01007">
    <property type="entry name" value="Aldolase_II"/>
    <property type="match status" value="1"/>
</dbReference>
<dbReference type="SUPFAM" id="SSF53639">
    <property type="entry name" value="AraD/HMP-PK domain-like"/>
    <property type="match status" value="1"/>
</dbReference>
<protein>
    <recommendedName>
        <fullName evidence="1">Probable methylthioribulose-1-phosphate dehydratase</fullName>
        <shortName evidence="1">MTRu-1-P dehydratase</shortName>
        <ecNumber evidence="1">4.2.1.109</ecNumber>
    </recommendedName>
</protein>
<accession>C4WU37</accession>
<sequence>MDYVSDDFAPSNILSCNDDSGDHPRNLIPELCRQFYANGWVTGTGGGISIKYNDQIFIAPSGVQKERIQPDDLFVQNLNGEDVIIPKPEKKLSKSQCTPIFMCSFTERNAGAVIHVHSQEVVKLCLLNPENEVKITGLEMIKGIYNEKKGKFYDNDEELIIPIIENSKYEKDLVDTFKIALKKYPSTSAVLVRNHGMYVWGSNWKTPKTQLEGYEYLFKIAIFKKIPPV</sequence>
<name>MTNB_ACYPI</name>
<organism>
    <name type="scientific">Acyrthosiphon pisum</name>
    <name type="common">Pea aphid</name>
    <dbReference type="NCBI Taxonomy" id="7029"/>
    <lineage>
        <taxon>Eukaryota</taxon>
        <taxon>Metazoa</taxon>
        <taxon>Ecdysozoa</taxon>
        <taxon>Arthropoda</taxon>
        <taxon>Hexapoda</taxon>
        <taxon>Insecta</taxon>
        <taxon>Pterygota</taxon>
        <taxon>Neoptera</taxon>
        <taxon>Paraneoptera</taxon>
        <taxon>Hemiptera</taxon>
        <taxon>Sternorrhyncha</taxon>
        <taxon>Aphidomorpha</taxon>
        <taxon>Aphidoidea</taxon>
        <taxon>Aphididae</taxon>
        <taxon>Macrosiphini</taxon>
        <taxon>Acyrthosiphon</taxon>
    </lineage>
</organism>
<comment type="function">
    <text evidence="1">Catalyzes the dehydration of methylthioribulose-1-phosphate (MTRu-1-P) into 2,3-diketo-5-methylthiopentyl-1-phosphate (DK-MTP-1-P).</text>
</comment>
<comment type="catalytic activity">
    <reaction evidence="1">
        <text>5-(methylsulfanyl)-D-ribulose 1-phosphate = 5-methylsulfanyl-2,3-dioxopentyl phosphate + H2O</text>
        <dbReference type="Rhea" id="RHEA:15549"/>
        <dbReference type="ChEBI" id="CHEBI:15377"/>
        <dbReference type="ChEBI" id="CHEBI:58548"/>
        <dbReference type="ChEBI" id="CHEBI:58828"/>
        <dbReference type="EC" id="4.2.1.109"/>
    </reaction>
</comment>
<comment type="cofactor">
    <cofactor evidence="1">
        <name>Zn(2+)</name>
        <dbReference type="ChEBI" id="CHEBI:29105"/>
    </cofactor>
    <text evidence="1">Binds 1 zinc ion per subunit.</text>
</comment>
<comment type="pathway">
    <text evidence="1">Amino-acid biosynthesis; L-methionine biosynthesis via salvage pathway; L-methionine from S-methyl-5-thio-alpha-D-ribose 1-phosphate: step 2/6.</text>
</comment>
<comment type="subcellular location">
    <subcellularLocation>
        <location evidence="1">Cytoplasm</location>
    </subcellularLocation>
</comment>
<comment type="similarity">
    <text evidence="1">Belongs to the aldolase class II family. MtnB subfamily.</text>
</comment>
<reference key="1">
    <citation type="submission" date="2009-06" db="EMBL/GenBank/DDBJ databases">
        <title>A full-length cDNA resource of the pea aphid, Acyrthosiphon pisum.</title>
        <authorList>
            <person name="Shigenobu S."/>
            <person name="Nakabachi A."/>
            <person name="Richards S."/>
        </authorList>
    </citation>
    <scope>NUCLEOTIDE SEQUENCE [LARGE SCALE MRNA]</scope>
    <source>
        <strain>LSR1</strain>
    </source>
</reference>
<proteinExistence type="evidence at transcript level"/>
<keyword id="KW-0028">Amino-acid biosynthesis</keyword>
<keyword id="KW-0963">Cytoplasm</keyword>
<keyword id="KW-0456">Lyase</keyword>
<keyword id="KW-0479">Metal-binding</keyword>
<keyword id="KW-0486">Methionine biosynthesis</keyword>
<keyword id="KW-1185">Reference proteome</keyword>
<keyword id="KW-0862">Zinc</keyword>